<keyword id="KW-0378">Hydrolase</keyword>
<keyword id="KW-1185">Reference proteome</keyword>
<proteinExistence type="inferred from homology"/>
<name>APAH_SALAR</name>
<protein>
    <recommendedName>
        <fullName evidence="1">Bis(5'-nucleosyl)-tetraphosphatase, symmetrical</fullName>
        <ecNumber evidence="1">3.6.1.41</ecNumber>
    </recommendedName>
    <alternativeName>
        <fullName evidence="1">Ap4A hydrolase</fullName>
    </alternativeName>
    <alternativeName>
        <fullName evidence="1">Diadenosine 5',5'''-P1,P4-tetraphosphate pyrophosphohydrolase</fullName>
    </alternativeName>
    <alternativeName>
        <fullName evidence="1">Diadenosine tetraphosphatase</fullName>
    </alternativeName>
</protein>
<reference key="1">
    <citation type="submission" date="2007-11" db="EMBL/GenBank/DDBJ databases">
        <authorList>
            <consortium name="The Salmonella enterica serovar Arizonae Genome Sequencing Project"/>
            <person name="McClelland M."/>
            <person name="Sanderson E.K."/>
            <person name="Porwollik S."/>
            <person name="Spieth J."/>
            <person name="Clifton W.S."/>
            <person name="Fulton R."/>
            <person name="Chunyan W."/>
            <person name="Wollam A."/>
            <person name="Shah N."/>
            <person name="Pepin K."/>
            <person name="Bhonagiri V."/>
            <person name="Nash W."/>
            <person name="Johnson M."/>
            <person name="Thiruvilangam P."/>
            <person name="Wilson R."/>
        </authorList>
    </citation>
    <scope>NUCLEOTIDE SEQUENCE [LARGE SCALE GENOMIC DNA]</scope>
    <source>
        <strain>ATCC BAA-731 / CDC346-86 / RSK2980</strain>
    </source>
</reference>
<feature type="chain" id="PRO_1000077718" description="Bis(5'-nucleosyl)-tetraphosphatase, symmetrical">
    <location>
        <begin position="1"/>
        <end position="282"/>
    </location>
</feature>
<organism>
    <name type="scientific">Salmonella arizonae (strain ATCC BAA-731 / CDC346-86 / RSK2980)</name>
    <dbReference type="NCBI Taxonomy" id="41514"/>
    <lineage>
        <taxon>Bacteria</taxon>
        <taxon>Pseudomonadati</taxon>
        <taxon>Pseudomonadota</taxon>
        <taxon>Gammaproteobacteria</taxon>
        <taxon>Enterobacterales</taxon>
        <taxon>Enterobacteriaceae</taxon>
        <taxon>Salmonella</taxon>
    </lineage>
</organism>
<comment type="function">
    <text evidence="1">Hydrolyzes diadenosine 5',5'''-P1,P4-tetraphosphate to yield ADP.</text>
</comment>
<comment type="catalytic activity">
    <reaction evidence="1">
        <text>P(1),P(4)-bis(5'-adenosyl) tetraphosphate + H2O = 2 ADP + 2 H(+)</text>
        <dbReference type="Rhea" id="RHEA:24252"/>
        <dbReference type="ChEBI" id="CHEBI:15377"/>
        <dbReference type="ChEBI" id="CHEBI:15378"/>
        <dbReference type="ChEBI" id="CHEBI:58141"/>
        <dbReference type="ChEBI" id="CHEBI:456216"/>
        <dbReference type="EC" id="3.6.1.41"/>
    </reaction>
</comment>
<comment type="similarity">
    <text evidence="1">Belongs to the Ap4A hydrolase family.</text>
</comment>
<sequence>MATYLIGDVHGCYDELIALLQQVEFTPETDTLWLTGDLVARGPGSLDVLRYVKSLGDSVRLVLGNHDLHLLAVFAGISRNKPKDRLTPLLEAPDADELLNWLRRQPLLQVDEEKKLVMAHAGITPQWDLQTAKECARDVEAVLSSDSYPFFLDAMYGDMPNNWSPELSGLARLRFITNAFTRMRYCFPNGQLDMYSKASPENAPAPLKPWFAIPGPVSEAYSIAFGHWASLDGKGTPDGIYALDTGCCWGGKLTCLRWEDKQYFVQPSNRQMDMGEGEAINA</sequence>
<evidence type="ECO:0000255" key="1">
    <source>
        <dbReference type="HAMAP-Rule" id="MF_00199"/>
    </source>
</evidence>
<dbReference type="EC" id="3.6.1.41" evidence="1"/>
<dbReference type="EMBL" id="CP000880">
    <property type="protein sequence ID" value="ABX22762.1"/>
    <property type="molecule type" value="Genomic_DNA"/>
</dbReference>
<dbReference type="SMR" id="A9MQG4"/>
<dbReference type="STRING" id="41514.SARI_02916"/>
<dbReference type="KEGG" id="ses:SARI_02916"/>
<dbReference type="HOGENOM" id="CLU_056184_2_0_6"/>
<dbReference type="Proteomes" id="UP000002084">
    <property type="component" value="Chromosome"/>
</dbReference>
<dbReference type="GO" id="GO:0008803">
    <property type="term" value="F:bis(5'-nucleosyl)-tetraphosphatase (symmetrical) activity"/>
    <property type="evidence" value="ECO:0007669"/>
    <property type="project" value="UniProtKB-UniRule"/>
</dbReference>
<dbReference type="CDD" id="cd07422">
    <property type="entry name" value="MPP_ApaH"/>
    <property type="match status" value="1"/>
</dbReference>
<dbReference type="FunFam" id="3.60.21.10:FF:000013">
    <property type="entry name" value="Bis(5'-nucleosyl)-tetraphosphatase, symmetrical"/>
    <property type="match status" value="1"/>
</dbReference>
<dbReference type="Gene3D" id="3.60.21.10">
    <property type="match status" value="1"/>
</dbReference>
<dbReference type="HAMAP" id="MF_00199">
    <property type="entry name" value="ApaH"/>
    <property type="match status" value="1"/>
</dbReference>
<dbReference type="InterPro" id="IPR004617">
    <property type="entry name" value="ApaH"/>
</dbReference>
<dbReference type="InterPro" id="IPR004843">
    <property type="entry name" value="Calcineurin-like_PHP_ApaH"/>
</dbReference>
<dbReference type="InterPro" id="IPR029052">
    <property type="entry name" value="Metallo-depent_PP-like"/>
</dbReference>
<dbReference type="NCBIfam" id="TIGR00668">
    <property type="entry name" value="apaH"/>
    <property type="match status" value="1"/>
</dbReference>
<dbReference type="NCBIfam" id="NF001204">
    <property type="entry name" value="PRK00166.1"/>
    <property type="match status" value="1"/>
</dbReference>
<dbReference type="PANTHER" id="PTHR40942">
    <property type="match status" value="1"/>
</dbReference>
<dbReference type="PANTHER" id="PTHR40942:SF4">
    <property type="entry name" value="CYTOCHROME C5"/>
    <property type="match status" value="1"/>
</dbReference>
<dbReference type="Pfam" id="PF00149">
    <property type="entry name" value="Metallophos"/>
    <property type="match status" value="1"/>
</dbReference>
<dbReference type="PIRSF" id="PIRSF000903">
    <property type="entry name" value="B5n-ttraPtase_sm"/>
    <property type="match status" value="1"/>
</dbReference>
<dbReference type="SUPFAM" id="SSF56300">
    <property type="entry name" value="Metallo-dependent phosphatases"/>
    <property type="match status" value="1"/>
</dbReference>
<accession>A9MQG4</accession>
<gene>
    <name evidence="1" type="primary">apaH</name>
    <name type="ordered locus">SARI_02916</name>
</gene>